<dbReference type="EC" id="2.1.3.3" evidence="2"/>
<dbReference type="EMBL" id="CP000487">
    <property type="protein sequence ID" value="ABK81844.1"/>
    <property type="molecule type" value="Genomic_DNA"/>
</dbReference>
<dbReference type="RefSeq" id="WP_002850612.1">
    <property type="nucleotide sequence ID" value="NC_008599.1"/>
</dbReference>
<dbReference type="SMR" id="A0RR73"/>
<dbReference type="GeneID" id="61065390"/>
<dbReference type="KEGG" id="cff:CFF8240_1573"/>
<dbReference type="eggNOG" id="COG0078">
    <property type="taxonomic scope" value="Bacteria"/>
</dbReference>
<dbReference type="HOGENOM" id="CLU_043846_3_2_7"/>
<dbReference type="UniPathway" id="UPA00068">
    <property type="reaction ID" value="UER00112"/>
</dbReference>
<dbReference type="Proteomes" id="UP000000760">
    <property type="component" value="Chromosome"/>
</dbReference>
<dbReference type="GO" id="GO:0005737">
    <property type="term" value="C:cytoplasm"/>
    <property type="evidence" value="ECO:0007669"/>
    <property type="project" value="UniProtKB-SubCell"/>
</dbReference>
<dbReference type="GO" id="GO:0043231">
    <property type="term" value="C:intracellular membrane-bounded organelle"/>
    <property type="evidence" value="ECO:0007669"/>
    <property type="project" value="TreeGrafter"/>
</dbReference>
<dbReference type="GO" id="GO:0016597">
    <property type="term" value="F:amino acid binding"/>
    <property type="evidence" value="ECO:0007669"/>
    <property type="project" value="InterPro"/>
</dbReference>
<dbReference type="GO" id="GO:0004585">
    <property type="term" value="F:ornithine carbamoyltransferase activity"/>
    <property type="evidence" value="ECO:0007669"/>
    <property type="project" value="UniProtKB-UniRule"/>
</dbReference>
<dbReference type="GO" id="GO:0042450">
    <property type="term" value="P:arginine biosynthetic process via ornithine"/>
    <property type="evidence" value="ECO:0007669"/>
    <property type="project" value="TreeGrafter"/>
</dbReference>
<dbReference type="GO" id="GO:0019240">
    <property type="term" value="P:citrulline biosynthetic process"/>
    <property type="evidence" value="ECO:0007669"/>
    <property type="project" value="TreeGrafter"/>
</dbReference>
<dbReference type="GO" id="GO:0006526">
    <property type="term" value="P:L-arginine biosynthetic process"/>
    <property type="evidence" value="ECO:0007669"/>
    <property type="project" value="UniProtKB-UniRule"/>
</dbReference>
<dbReference type="FunFam" id="3.40.50.1370:FF:000008">
    <property type="entry name" value="Ornithine carbamoyltransferase"/>
    <property type="match status" value="1"/>
</dbReference>
<dbReference type="Gene3D" id="3.40.50.1370">
    <property type="entry name" value="Aspartate/ornithine carbamoyltransferase"/>
    <property type="match status" value="2"/>
</dbReference>
<dbReference type="HAMAP" id="MF_01109">
    <property type="entry name" value="OTCase"/>
    <property type="match status" value="1"/>
</dbReference>
<dbReference type="InterPro" id="IPR006132">
    <property type="entry name" value="Asp/Orn_carbamoyltranf_P-bd"/>
</dbReference>
<dbReference type="InterPro" id="IPR006130">
    <property type="entry name" value="Asp/Orn_carbamoylTrfase"/>
</dbReference>
<dbReference type="InterPro" id="IPR036901">
    <property type="entry name" value="Asp/Orn_carbamoylTrfase_sf"/>
</dbReference>
<dbReference type="InterPro" id="IPR006131">
    <property type="entry name" value="Asp_carbamoyltransf_Asp/Orn-bd"/>
</dbReference>
<dbReference type="InterPro" id="IPR002292">
    <property type="entry name" value="Orn/put_carbamltrans"/>
</dbReference>
<dbReference type="InterPro" id="IPR024904">
    <property type="entry name" value="OTCase_ArgI"/>
</dbReference>
<dbReference type="NCBIfam" id="TIGR00658">
    <property type="entry name" value="orni_carb_tr"/>
    <property type="match status" value="1"/>
</dbReference>
<dbReference type="NCBIfam" id="NF001986">
    <property type="entry name" value="PRK00779.1"/>
    <property type="match status" value="1"/>
</dbReference>
<dbReference type="PANTHER" id="PTHR45753">
    <property type="entry name" value="ORNITHINE CARBAMOYLTRANSFERASE, MITOCHONDRIAL"/>
    <property type="match status" value="1"/>
</dbReference>
<dbReference type="PANTHER" id="PTHR45753:SF3">
    <property type="entry name" value="ORNITHINE TRANSCARBAMYLASE, MITOCHONDRIAL"/>
    <property type="match status" value="1"/>
</dbReference>
<dbReference type="Pfam" id="PF00185">
    <property type="entry name" value="OTCace"/>
    <property type="match status" value="1"/>
</dbReference>
<dbReference type="Pfam" id="PF02729">
    <property type="entry name" value="OTCace_N"/>
    <property type="match status" value="1"/>
</dbReference>
<dbReference type="PRINTS" id="PR00100">
    <property type="entry name" value="AOTCASE"/>
</dbReference>
<dbReference type="PRINTS" id="PR00102">
    <property type="entry name" value="OTCASE"/>
</dbReference>
<dbReference type="SUPFAM" id="SSF53671">
    <property type="entry name" value="Aspartate/ornithine carbamoyltransferase"/>
    <property type="match status" value="1"/>
</dbReference>
<dbReference type="PROSITE" id="PS00097">
    <property type="entry name" value="CARBAMOYLTRANSFERASE"/>
    <property type="match status" value="1"/>
</dbReference>
<sequence>MRHFLTLNDLDKNEILDILSLAKDIKKEAKSRNYISYLKDQTLAMIFEKSSTRTRVSFEVGIHQLGGKGLFLSSRDIQLGRGEPVKDTARVLGRMVDMIMARVYKQSDLEELAKFSGVPVINGLSDDFHPVQLMSDLLTLSELGLNLQTMKVAYVGDGNNMTNSWLMAASKLGFELRVATPKGYEVPQWVLDIAKQNSKISCANLIITDNPKAAISGADVVTTDTWVSMGQEDEKEKRINDFAGYCVDDDMMSLAAKDAKFLHCLPAYRGYEVSEAVFEAHAGEIFSEAENRLHAQKAVMVWCDRKRYE</sequence>
<keyword id="KW-0028">Amino-acid biosynthesis</keyword>
<keyword id="KW-0055">Arginine biosynthesis</keyword>
<keyword id="KW-0963">Cytoplasm</keyword>
<keyword id="KW-0808">Transferase</keyword>
<evidence type="ECO:0000250" key="1"/>
<evidence type="ECO:0000255" key="2">
    <source>
        <dbReference type="HAMAP-Rule" id="MF_01109"/>
    </source>
</evidence>
<reference key="1">
    <citation type="submission" date="2006-11" db="EMBL/GenBank/DDBJ databases">
        <title>Sequence of Campylobacter fetus subsp. fetus 82-40.</title>
        <authorList>
            <person name="Fouts D.E."/>
            <person name="Nelson K.E."/>
        </authorList>
    </citation>
    <scope>NUCLEOTIDE SEQUENCE [LARGE SCALE GENOMIC DNA]</scope>
    <source>
        <strain>82-40</strain>
    </source>
</reference>
<name>OTC_CAMFF</name>
<accession>A0RR73</accession>
<gene>
    <name evidence="2" type="primary">argF</name>
    <name type="ordered locus">CFF8240_1573</name>
</gene>
<organism>
    <name type="scientific">Campylobacter fetus subsp. fetus (strain 82-40)</name>
    <dbReference type="NCBI Taxonomy" id="360106"/>
    <lineage>
        <taxon>Bacteria</taxon>
        <taxon>Pseudomonadati</taxon>
        <taxon>Campylobacterota</taxon>
        <taxon>Epsilonproteobacteria</taxon>
        <taxon>Campylobacterales</taxon>
        <taxon>Campylobacteraceae</taxon>
        <taxon>Campylobacter</taxon>
    </lineage>
</organism>
<protein>
    <recommendedName>
        <fullName evidence="2">Ornithine carbamoyltransferase</fullName>
        <shortName evidence="2">OTCase</shortName>
        <ecNumber evidence="2">2.1.3.3</ecNumber>
    </recommendedName>
</protein>
<proteinExistence type="inferred from homology"/>
<feature type="chain" id="PRO_1000065082" description="Ornithine carbamoyltransferase">
    <location>
        <begin position="1"/>
        <end position="309"/>
    </location>
</feature>
<feature type="binding site" evidence="2">
    <location>
        <begin position="51"/>
        <end position="54"/>
    </location>
    <ligand>
        <name>carbamoyl phosphate</name>
        <dbReference type="ChEBI" id="CHEBI:58228"/>
    </ligand>
</feature>
<feature type="binding site" evidence="2">
    <location>
        <position position="78"/>
    </location>
    <ligand>
        <name>carbamoyl phosphate</name>
        <dbReference type="ChEBI" id="CHEBI:58228"/>
    </ligand>
</feature>
<feature type="binding site" evidence="2">
    <location>
        <position position="102"/>
    </location>
    <ligand>
        <name>carbamoyl phosphate</name>
        <dbReference type="ChEBI" id="CHEBI:58228"/>
    </ligand>
</feature>
<feature type="binding site" evidence="2">
    <location>
        <begin position="129"/>
        <end position="132"/>
    </location>
    <ligand>
        <name>carbamoyl phosphate</name>
        <dbReference type="ChEBI" id="CHEBI:58228"/>
    </ligand>
</feature>
<feature type="binding site" evidence="2">
    <location>
        <position position="160"/>
    </location>
    <ligand>
        <name>L-ornithine</name>
        <dbReference type="ChEBI" id="CHEBI:46911"/>
    </ligand>
</feature>
<feature type="binding site" evidence="2">
    <location>
        <position position="224"/>
    </location>
    <ligand>
        <name>L-ornithine</name>
        <dbReference type="ChEBI" id="CHEBI:46911"/>
    </ligand>
</feature>
<feature type="binding site" evidence="2">
    <location>
        <begin position="228"/>
        <end position="229"/>
    </location>
    <ligand>
        <name>L-ornithine</name>
        <dbReference type="ChEBI" id="CHEBI:46911"/>
    </ligand>
</feature>
<feature type="binding site" evidence="2">
    <location>
        <begin position="264"/>
        <end position="265"/>
    </location>
    <ligand>
        <name>carbamoyl phosphate</name>
        <dbReference type="ChEBI" id="CHEBI:58228"/>
    </ligand>
</feature>
<feature type="binding site" evidence="2">
    <location>
        <position position="292"/>
    </location>
    <ligand>
        <name>carbamoyl phosphate</name>
        <dbReference type="ChEBI" id="CHEBI:58228"/>
    </ligand>
</feature>
<comment type="function">
    <text evidence="1">Reversibly catalyzes the transfer of the carbamoyl group from carbamoyl phosphate (CP) to the N(epsilon) atom of ornithine (ORN) to produce L-citrulline.</text>
</comment>
<comment type="catalytic activity">
    <reaction evidence="2">
        <text>carbamoyl phosphate + L-ornithine = L-citrulline + phosphate + H(+)</text>
        <dbReference type="Rhea" id="RHEA:19513"/>
        <dbReference type="ChEBI" id="CHEBI:15378"/>
        <dbReference type="ChEBI" id="CHEBI:43474"/>
        <dbReference type="ChEBI" id="CHEBI:46911"/>
        <dbReference type="ChEBI" id="CHEBI:57743"/>
        <dbReference type="ChEBI" id="CHEBI:58228"/>
        <dbReference type="EC" id="2.1.3.3"/>
    </reaction>
</comment>
<comment type="pathway">
    <text evidence="2">Amino-acid biosynthesis; L-arginine biosynthesis; L-arginine from L-ornithine and carbamoyl phosphate: step 1/3.</text>
</comment>
<comment type="subcellular location">
    <subcellularLocation>
        <location evidence="2">Cytoplasm</location>
    </subcellularLocation>
</comment>
<comment type="similarity">
    <text evidence="2">Belongs to the aspartate/ornithine carbamoyltransferase superfamily. OTCase family.</text>
</comment>